<gene>
    <name type="primary">MT-CYB</name>
    <name type="synonym">COB</name>
    <name type="synonym">CYTB</name>
    <name type="synonym">MTCYB</name>
</gene>
<comment type="function">
    <text evidence="2">Component of the ubiquinol-cytochrome c reductase complex (complex III or cytochrome b-c1 complex) that is part of the mitochondrial respiratory chain. The b-c1 complex mediates electron transfer from ubiquinol to cytochrome c. Contributes to the generation of a proton gradient across the mitochondrial membrane that is then used for ATP synthesis.</text>
</comment>
<comment type="cofactor">
    <cofactor evidence="2">
        <name>heme b</name>
        <dbReference type="ChEBI" id="CHEBI:60344"/>
    </cofactor>
    <text evidence="2">Binds 2 heme b groups non-covalently.</text>
</comment>
<comment type="subunit">
    <text evidence="2">The cytochrome bc1 complex contains 11 subunits: 3 respiratory subunits (MT-CYB, CYC1 and UQCRFS1), 2 core proteins (UQCRC1 and UQCRC2) and 6 low-molecular weight proteins (UQCRH/QCR6, UQCRB/QCR7, UQCRQ/QCR8, UQCR10/QCR9, UQCR11/QCR10 and a cleavage product of UQCRFS1). This cytochrome bc1 complex then forms a dimer.</text>
</comment>
<comment type="subcellular location">
    <subcellularLocation>
        <location evidence="2">Mitochondrion inner membrane</location>
        <topology evidence="2">Multi-pass membrane protein</topology>
    </subcellularLocation>
</comment>
<comment type="miscellaneous">
    <text evidence="1">Heme 1 (or BL or b562) is low-potential and absorbs at about 562 nm, and heme 2 (or BH or b566) is high-potential and absorbs at about 566 nm.</text>
</comment>
<comment type="similarity">
    <text evidence="3 4">Belongs to the cytochrome b family.</text>
</comment>
<comment type="caution">
    <text evidence="2">The full-length protein contains only eight transmembrane helices, not nine as predicted by bioinformatics tools.</text>
</comment>
<feature type="chain" id="PRO_0000061280" description="Cytochrome b">
    <location>
        <begin position="1"/>
        <end position="380"/>
    </location>
</feature>
<feature type="transmembrane region" description="Helical" evidence="2">
    <location>
        <begin position="33"/>
        <end position="53"/>
    </location>
</feature>
<feature type="transmembrane region" description="Helical" evidence="2">
    <location>
        <begin position="77"/>
        <end position="98"/>
    </location>
</feature>
<feature type="transmembrane region" description="Helical" evidence="2">
    <location>
        <begin position="113"/>
        <end position="133"/>
    </location>
</feature>
<feature type="transmembrane region" description="Helical" evidence="2">
    <location>
        <begin position="178"/>
        <end position="198"/>
    </location>
</feature>
<feature type="transmembrane region" description="Helical" evidence="2">
    <location>
        <begin position="226"/>
        <end position="246"/>
    </location>
</feature>
<feature type="transmembrane region" description="Helical" evidence="2">
    <location>
        <begin position="288"/>
        <end position="308"/>
    </location>
</feature>
<feature type="transmembrane region" description="Helical" evidence="2">
    <location>
        <begin position="320"/>
        <end position="340"/>
    </location>
</feature>
<feature type="transmembrane region" description="Helical" evidence="2">
    <location>
        <begin position="347"/>
        <end position="367"/>
    </location>
</feature>
<feature type="binding site" description="axial binding residue" evidence="2">
    <location>
        <position position="83"/>
    </location>
    <ligand>
        <name>heme b</name>
        <dbReference type="ChEBI" id="CHEBI:60344"/>
        <label>b562</label>
    </ligand>
    <ligandPart>
        <name>Fe</name>
        <dbReference type="ChEBI" id="CHEBI:18248"/>
    </ligandPart>
</feature>
<feature type="binding site" description="axial binding residue" evidence="2">
    <location>
        <position position="97"/>
    </location>
    <ligand>
        <name>heme b</name>
        <dbReference type="ChEBI" id="CHEBI:60344"/>
        <label>b566</label>
    </ligand>
    <ligandPart>
        <name>Fe</name>
        <dbReference type="ChEBI" id="CHEBI:18248"/>
    </ligandPart>
</feature>
<feature type="binding site" description="axial binding residue" evidence="2">
    <location>
        <position position="182"/>
    </location>
    <ligand>
        <name>heme b</name>
        <dbReference type="ChEBI" id="CHEBI:60344"/>
        <label>b562</label>
    </ligand>
    <ligandPart>
        <name>Fe</name>
        <dbReference type="ChEBI" id="CHEBI:18248"/>
    </ligandPart>
</feature>
<feature type="binding site" description="axial binding residue" evidence="2">
    <location>
        <position position="196"/>
    </location>
    <ligand>
        <name>heme b</name>
        <dbReference type="ChEBI" id="CHEBI:60344"/>
        <label>b566</label>
    </ligand>
    <ligandPart>
        <name>Fe</name>
        <dbReference type="ChEBI" id="CHEBI:18248"/>
    </ligandPart>
</feature>
<feature type="binding site" evidence="2">
    <location>
        <position position="201"/>
    </location>
    <ligand>
        <name>a ubiquinone</name>
        <dbReference type="ChEBI" id="CHEBI:16389"/>
    </ligand>
</feature>
<evidence type="ECO:0000250" key="1"/>
<evidence type="ECO:0000250" key="2">
    <source>
        <dbReference type="UniProtKB" id="P00157"/>
    </source>
</evidence>
<evidence type="ECO:0000255" key="3">
    <source>
        <dbReference type="PROSITE-ProRule" id="PRU00967"/>
    </source>
</evidence>
<evidence type="ECO:0000255" key="4">
    <source>
        <dbReference type="PROSITE-ProRule" id="PRU00968"/>
    </source>
</evidence>
<sequence length="380" mass="42810">MTPLRKTNPLMKLINHSLVDLPAPSNISMWWNLGSLLGTCLILQIVTGLFLAMHYTPDASMAFSSVAHITRDVNYGWVIRYLHANGASMFFICLFLHIGRGLYYGSFLYLETWNIGIILLLATMATAFMGYVLPWGQMSFWGATVITNLLSAVPYIGTDLVQWVWGGYSVDNATLTRFFTFHFILPFIITALVALHLLFLHETGSNNPLGISSQPDKITFHPYYTTKDILGLFLLLLTLMSLVLFSPDLLGDPDNYIQANPLSTPPHIKPEWYFLFAYAILRSVPNKLGGVLALLLSILILMTIPMLHTAKQQSMMFRPLSQLTYWLWAANLLTLTWIGGQPVSYPFITIGQVTSVLYFITILILMPTASLIENKMLKWT</sequence>
<dbReference type="EMBL" id="Y13307">
    <property type="protein sequence ID" value="CAA73743.1"/>
    <property type="molecule type" value="Genomic_DNA"/>
</dbReference>
<dbReference type="SMR" id="O47890"/>
<dbReference type="GO" id="GO:0005743">
    <property type="term" value="C:mitochondrial inner membrane"/>
    <property type="evidence" value="ECO:0007669"/>
    <property type="project" value="UniProtKB-SubCell"/>
</dbReference>
<dbReference type="GO" id="GO:0045275">
    <property type="term" value="C:respiratory chain complex III"/>
    <property type="evidence" value="ECO:0007669"/>
    <property type="project" value="InterPro"/>
</dbReference>
<dbReference type="GO" id="GO:0046872">
    <property type="term" value="F:metal ion binding"/>
    <property type="evidence" value="ECO:0007669"/>
    <property type="project" value="UniProtKB-KW"/>
</dbReference>
<dbReference type="GO" id="GO:0008121">
    <property type="term" value="F:ubiquinol-cytochrome-c reductase activity"/>
    <property type="evidence" value="ECO:0007669"/>
    <property type="project" value="InterPro"/>
</dbReference>
<dbReference type="GO" id="GO:0006122">
    <property type="term" value="P:mitochondrial electron transport, ubiquinol to cytochrome c"/>
    <property type="evidence" value="ECO:0007669"/>
    <property type="project" value="TreeGrafter"/>
</dbReference>
<dbReference type="CDD" id="cd00290">
    <property type="entry name" value="cytochrome_b_C"/>
    <property type="match status" value="1"/>
</dbReference>
<dbReference type="CDD" id="cd00284">
    <property type="entry name" value="Cytochrome_b_N"/>
    <property type="match status" value="1"/>
</dbReference>
<dbReference type="FunFam" id="1.20.810.10:FF:000002">
    <property type="entry name" value="Cytochrome b"/>
    <property type="match status" value="1"/>
</dbReference>
<dbReference type="Gene3D" id="1.20.810.10">
    <property type="entry name" value="Cytochrome Bc1 Complex, Chain C"/>
    <property type="match status" value="1"/>
</dbReference>
<dbReference type="InterPro" id="IPR005798">
    <property type="entry name" value="Cyt_b/b6_C"/>
</dbReference>
<dbReference type="InterPro" id="IPR036150">
    <property type="entry name" value="Cyt_b/b6_C_sf"/>
</dbReference>
<dbReference type="InterPro" id="IPR005797">
    <property type="entry name" value="Cyt_b/b6_N"/>
</dbReference>
<dbReference type="InterPro" id="IPR027387">
    <property type="entry name" value="Cytb/b6-like_sf"/>
</dbReference>
<dbReference type="InterPro" id="IPR030689">
    <property type="entry name" value="Cytochrome_b"/>
</dbReference>
<dbReference type="InterPro" id="IPR048260">
    <property type="entry name" value="Cytochrome_b_C_euk/bac"/>
</dbReference>
<dbReference type="InterPro" id="IPR048259">
    <property type="entry name" value="Cytochrome_b_N_euk/bac"/>
</dbReference>
<dbReference type="InterPro" id="IPR016174">
    <property type="entry name" value="Di-haem_cyt_TM"/>
</dbReference>
<dbReference type="PANTHER" id="PTHR19271">
    <property type="entry name" value="CYTOCHROME B"/>
    <property type="match status" value="1"/>
</dbReference>
<dbReference type="PANTHER" id="PTHR19271:SF16">
    <property type="entry name" value="CYTOCHROME B"/>
    <property type="match status" value="1"/>
</dbReference>
<dbReference type="Pfam" id="PF00032">
    <property type="entry name" value="Cytochrom_B_C"/>
    <property type="match status" value="1"/>
</dbReference>
<dbReference type="Pfam" id="PF00033">
    <property type="entry name" value="Cytochrome_B"/>
    <property type="match status" value="1"/>
</dbReference>
<dbReference type="PIRSF" id="PIRSF038885">
    <property type="entry name" value="COB"/>
    <property type="match status" value="1"/>
</dbReference>
<dbReference type="SUPFAM" id="SSF81648">
    <property type="entry name" value="a domain/subunit of cytochrome bc1 complex (Ubiquinol-cytochrome c reductase)"/>
    <property type="match status" value="1"/>
</dbReference>
<dbReference type="SUPFAM" id="SSF81342">
    <property type="entry name" value="Transmembrane di-heme cytochromes"/>
    <property type="match status" value="1"/>
</dbReference>
<dbReference type="PROSITE" id="PS51003">
    <property type="entry name" value="CYTB_CTER"/>
    <property type="match status" value="1"/>
</dbReference>
<dbReference type="PROSITE" id="PS51002">
    <property type="entry name" value="CYTB_NTER"/>
    <property type="match status" value="1"/>
</dbReference>
<name>CYB_NOMGA</name>
<protein>
    <recommendedName>
        <fullName>Cytochrome b</fullName>
    </recommendedName>
    <alternativeName>
        <fullName>Complex III subunit 3</fullName>
    </alternativeName>
    <alternativeName>
        <fullName>Complex III subunit III</fullName>
    </alternativeName>
    <alternativeName>
        <fullName>Cytochrome b-c1 complex subunit 3</fullName>
    </alternativeName>
    <alternativeName>
        <fullName>Ubiquinol-cytochrome-c reductase complex cytochrome b subunit</fullName>
    </alternativeName>
</protein>
<proteinExistence type="inferred from homology"/>
<geneLocation type="mitochondrion"/>
<keyword id="KW-0249">Electron transport</keyword>
<keyword id="KW-0349">Heme</keyword>
<keyword id="KW-0408">Iron</keyword>
<keyword id="KW-0472">Membrane</keyword>
<keyword id="KW-0479">Metal-binding</keyword>
<keyword id="KW-0496">Mitochondrion</keyword>
<keyword id="KW-0999">Mitochondrion inner membrane</keyword>
<keyword id="KW-0679">Respiratory chain</keyword>
<keyword id="KW-0812">Transmembrane</keyword>
<keyword id="KW-1133">Transmembrane helix</keyword>
<keyword id="KW-0813">Transport</keyword>
<keyword id="KW-0830">Ubiquinone</keyword>
<accession>O47890</accession>
<reference key="1">
    <citation type="journal article" date="1998" name="Mol. Phylogenet. Evol.">
        <title>Evolution of the gibbon subgenera inferred from cytochrome b DNA sequence data.</title>
        <authorList>
            <person name="Hall L.M."/>
            <person name="Jones D.S."/>
            <person name="Wood B.A."/>
        </authorList>
    </citation>
    <scope>NUCLEOTIDE SEQUENCE [GENOMIC DNA]</scope>
</reference>
<organism>
    <name type="scientific">Nomascus gabriellae</name>
    <name type="common">Red-cheeked gibbon</name>
    <dbReference type="NCBI Taxonomy" id="61852"/>
    <lineage>
        <taxon>Eukaryota</taxon>
        <taxon>Metazoa</taxon>
        <taxon>Chordata</taxon>
        <taxon>Craniata</taxon>
        <taxon>Vertebrata</taxon>
        <taxon>Euteleostomi</taxon>
        <taxon>Mammalia</taxon>
        <taxon>Eutheria</taxon>
        <taxon>Euarchontoglires</taxon>
        <taxon>Primates</taxon>
        <taxon>Haplorrhini</taxon>
        <taxon>Catarrhini</taxon>
        <taxon>Hylobatidae</taxon>
        <taxon>Nomascus</taxon>
    </lineage>
</organism>